<organism evidence="11">
    <name type="scientific">Caenorhabditis elegans</name>
    <dbReference type="NCBI Taxonomy" id="6239"/>
    <lineage>
        <taxon>Eukaryota</taxon>
        <taxon>Metazoa</taxon>
        <taxon>Ecdysozoa</taxon>
        <taxon>Nematoda</taxon>
        <taxon>Chromadorea</taxon>
        <taxon>Rhabditida</taxon>
        <taxon>Rhabditina</taxon>
        <taxon>Rhabditomorpha</taxon>
        <taxon>Rhabditoidea</taxon>
        <taxon>Rhabditidae</taxon>
        <taxon>Peloderinae</taxon>
        <taxon>Caenorhabditis</taxon>
    </lineage>
</organism>
<gene>
    <name evidence="12" type="primary">rpn-10</name>
    <name evidence="12" type="ORF">B0205.3</name>
</gene>
<comment type="function">
    <text evidence="2 6 7 8 9">Binds and presumably selects ubiquitin-conjugates for destruction (By similarity). Required for protein degradation and ubiquitin-proteasome system (UBS) function and regulates proteasomal subunit expression (PubMed:20453865, PubMed:22105480, PubMed:26828939). Involvement in UBS might be cell type specific (PubMed:20453865). Regulator of the autophagy-lysosome pathway that may confer resistance to autophagy by regulating the expression of autophagy-related proteins such as lgg-1, and by regulating lysosome formation, possibly by modulating elt-2 activity (PubMed:26828939). Required for fertility, sperm production, and sex determination through regulation of tra-2 protein (PubMed:17050737). Plays a role in the elimination of paternal mitochondria in fertilized eggs (PubMed:22105480).</text>
</comment>
<comment type="subunit">
    <text evidence="1">The 26S proteasome is composed of a core protease, known as the 20S proteasome, capped at one or both ends by the 19S regulatory complex (RC). The RC is composed of at least 18 different subunits in two subcomplexes, the base and the lid, which form the portions proximal and distal to the 20S proteolytic core, respectively.</text>
</comment>
<comment type="subcellular location">
    <subcellularLocation>
        <location evidence="9">Cytoplasm</location>
    </subcellularLocation>
    <subcellularLocation>
        <location evidence="9">Nucleus</location>
    </subcellularLocation>
</comment>
<comment type="tissue specificity">
    <text evidence="9">Broadly expressed with high expression in the pharynx, intestine, hypodermis and spermatheca and weak expression in the excretory cell, body wall muscle, vulva and somatic gonad.</text>
</comment>
<comment type="disruption phenotype">
    <text evidence="6 7 8 9">Temperature-dependent increase in lifespan with a modest increase at 20 degrees Celsius and a 30% increase in mean lifespan at 25 degrees Celsius compared to wild-type animals (PubMed:26828939). Reduced fertility with no sperm produced in the spermatheca, accumulation of a sex-determination protein tra-2 in the intestine, no embryos in the uterus, and an increase in the development time to adulthood as evidenced by an expansion of the proximal oocytes at a young adult stage (PubMed:17050737, PubMed:26828939). Reduced ubiquitin-proteasome system function (UBS), particularly in dorsorectal neurons (PubMed:20453865, PubMed:26828939). Enhanced protein stability and increased resistance to protostasis in response to thermal stress and oxidative stress induced by tert-butyl hydroperoxide (PubMed:26828939). Irregular autophagy-lysosome pathway function with increased autophagy coupled with fewer intestinal lysosomes and reduced lysosomal function (PubMed:26828939). RNAi-mediated knockdown of skn-1 or elt-2 in the null mutant results in animals which are smaller and that developmentally arrest before adulthood (PubMed:26828939). RNAi-mediated knockdown results in reduced egg laying, abnormal gonad morphology with expansion of the proximal gonad greater than that of wild-type animals, and defective degradation of polyubiquitinated proteins and leads to an accumulation of these proteins (PubMed:17050737). Also results in delayed removal of paternal mitochondria until 4-fold stage of embryonic development (PubMed:22105480).</text>
</comment>
<comment type="similarity">
    <text evidence="10">Belongs to the proteasome subunit S5A family.</text>
</comment>
<name>PSMD4_CAEEL</name>
<proteinExistence type="evidence at transcript level"/>
<protein>
    <recommendedName>
        <fullName evidence="2">26S proteasome non-ATPase regulatory subunit 4</fullName>
    </recommendedName>
    <alternativeName>
        <fullName evidence="10">26S proteasome regulatory subunit rpn-10</fullName>
    </alternativeName>
</protein>
<sequence>MVQESTMICVDNSEYMRNGDFQPTRLQSQQDAVNLVTQCKLRANPENAVGILSMANSVQVLSSLSTEQGRLMMKNHSIEPFGKCNFIAGIKIAHLALKHRQNRNHKMRVVLFIGSPLEEIEMNELVKIAKKMKKEKVLCDVIMFGENESDGHEKFSTFVDTLNGKEGSGSSLIVVPQGSSLTDALLQSSVCKNEDGQAAFGGGGNGMDNAFGMDVENDPDLALALRVSMEEERARQAAAAAANGGAADSGADAEVAAAAAAVPLEEMDMGAMTEEQQLEWALRLSMQENAPAEQPQVQHEQMDVDGAPAVGGDNLDDLMNNPELLQQIVDDLPAANAEKDDDKEKK</sequence>
<accession>O61742</accession>
<keyword id="KW-0963">Cytoplasm</keyword>
<keyword id="KW-0539">Nucleus</keyword>
<keyword id="KW-0647">Proteasome</keyword>
<keyword id="KW-1185">Reference proteome</keyword>
<keyword id="KW-0677">Repeat</keyword>
<feature type="chain" id="PRO_0000436780" description="26S proteasome non-ATPase regulatory subunit 4" evidence="10">
    <location>
        <begin position="1"/>
        <end position="346"/>
    </location>
</feature>
<feature type="domain" description="VWFA" evidence="4">
    <location>
        <begin position="5"/>
        <end position="190"/>
    </location>
</feature>
<feature type="domain" description="UIM 1" evidence="3">
    <location>
        <begin position="216"/>
        <end position="235"/>
    </location>
</feature>
<feature type="domain" description="UIM 2" evidence="3">
    <location>
        <begin position="273"/>
        <end position="292"/>
    </location>
</feature>
<feature type="region of interest" description="Disordered" evidence="5">
    <location>
        <begin position="290"/>
        <end position="346"/>
    </location>
</feature>
<feature type="compositionally biased region" description="Basic and acidic residues" evidence="5">
    <location>
        <begin position="337"/>
        <end position="346"/>
    </location>
</feature>
<evidence type="ECO:0000250" key="1">
    <source>
        <dbReference type="UniProtKB" id="P14685"/>
    </source>
</evidence>
<evidence type="ECO:0000250" key="2">
    <source>
        <dbReference type="UniProtKB" id="P55036"/>
    </source>
</evidence>
<evidence type="ECO:0000255" key="3">
    <source>
        <dbReference type="PROSITE-ProRule" id="PRU00213"/>
    </source>
</evidence>
<evidence type="ECO:0000255" key="4">
    <source>
        <dbReference type="PROSITE-ProRule" id="PRU00219"/>
    </source>
</evidence>
<evidence type="ECO:0000256" key="5">
    <source>
        <dbReference type="SAM" id="MobiDB-lite"/>
    </source>
</evidence>
<evidence type="ECO:0000269" key="6">
    <source>
    </source>
</evidence>
<evidence type="ECO:0000269" key="7">
    <source>
    </source>
</evidence>
<evidence type="ECO:0000269" key="8">
    <source>
    </source>
</evidence>
<evidence type="ECO:0000269" key="9">
    <source>
    </source>
</evidence>
<evidence type="ECO:0000305" key="10"/>
<evidence type="ECO:0000312" key="11">
    <source>
        <dbReference type="Proteomes" id="UP000001940"/>
    </source>
</evidence>
<evidence type="ECO:0000312" key="12">
    <source>
        <dbReference type="WormBase" id="B0205.3"/>
    </source>
</evidence>
<reference evidence="11" key="1">
    <citation type="journal article" date="1998" name="Science">
        <title>Genome sequence of the nematode C. elegans: a platform for investigating biology.</title>
        <authorList>
            <consortium name="The C. elegans sequencing consortium"/>
        </authorList>
    </citation>
    <scope>NUCLEOTIDE SEQUENCE [LARGE SCALE GENOMIC DNA]</scope>
    <source>
        <strain evidence="11">Bristol N2</strain>
    </source>
</reference>
<reference evidence="10" key="2">
    <citation type="journal article" date="2006" name="Mol. Biol. Cell">
        <title>Proteasomal ubiquitin receptor RPN-10 controls sex determination in Caenorhabditis elegans.</title>
        <authorList>
            <person name="Shimada M."/>
            <person name="Kanematsu K."/>
            <person name="Tanaka K."/>
            <person name="Yokosawa H."/>
            <person name="Kawahara H."/>
        </authorList>
    </citation>
    <scope>FUNCTION</scope>
    <scope>DISRUPTION PHENOTYPE</scope>
</reference>
<reference evidence="10" key="3">
    <citation type="journal article" date="2010" name="Nat. Methods">
        <title>A photoconvertible reporter of the ubiquitin-proteasome system in vivo.</title>
        <authorList>
            <person name="Hamer G."/>
            <person name="Matilainen O."/>
            <person name="Holmberg C.I."/>
        </authorList>
    </citation>
    <scope>FUNCTION</scope>
    <scope>DISRUPTION PHENOTYPE</scope>
</reference>
<reference evidence="10" key="4">
    <citation type="journal article" date="2011" name="Cell Res.">
        <title>Elimination of paternal mitochondria through the lysosomal degradation pathway in C. elegans.</title>
        <authorList>
            <person name="Zhou Q."/>
            <person name="Li H."/>
            <person name="Xue D."/>
        </authorList>
    </citation>
    <scope>FUNCTION</scope>
    <scope>DISRUPTION PHENOTYPE</scope>
</reference>
<reference evidence="10" key="5">
    <citation type="journal article" date="2016" name="PLoS Genet.">
        <title>Graded proteasome dysfunction in Caenorhabditis elegans activates an adaptive response involving the conserved skn-1 and elt-2 transcription factors and the autophagy-lysosome pathway.</title>
        <authorList>
            <person name="Keith S.A."/>
            <person name="Maddux S.K."/>
            <person name="Zhong Y."/>
            <person name="Chinchankar M.N."/>
            <person name="Ferguson A.A."/>
            <person name="Ghazi A."/>
            <person name="Fisher A.L."/>
        </authorList>
    </citation>
    <scope>FUNCTION</scope>
    <scope>SUBCELLULAR LOCATION</scope>
    <scope>TISSUE SPECIFICITY</scope>
    <scope>DISRUPTION PHENOTYPE</scope>
</reference>
<dbReference type="EMBL" id="BX284601">
    <property type="protein sequence ID" value="CCD61298.1"/>
    <property type="molecule type" value="Genomic_DNA"/>
</dbReference>
<dbReference type="RefSeq" id="NP_492809.1">
    <property type="nucleotide sequence ID" value="NM_060408.5"/>
</dbReference>
<dbReference type="SMR" id="O61742"/>
<dbReference type="FunCoup" id="O61742">
    <property type="interactions" value="2858"/>
</dbReference>
<dbReference type="IntAct" id="O61742">
    <property type="interactions" value="23"/>
</dbReference>
<dbReference type="MINT" id="O61742"/>
<dbReference type="STRING" id="6239.B0205.3.2"/>
<dbReference type="PaxDb" id="6239-B0205.3.1"/>
<dbReference type="PeptideAtlas" id="O61742"/>
<dbReference type="EnsemblMetazoa" id="B0205.3.1">
    <property type="protein sequence ID" value="B0205.3.1"/>
    <property type="gene ID" value="WBGene00004466"/>
</dbReference>
<dbReference type="GeneID" id="172977"/>
<dbReference type="KEGG" id="cel:CELE_B0205.3"/>
<dbReference type="UCSC" id="B0205.3.1">
    <property type="organism name" value="c. elegans"/>
</dbReference>
<dbReference type="AGR" id="WB:WBGene00004466"/>
<dbReference type="CTD" id="172977"/>
<dbReference type="WormBase" id="B0205.3">
    <property type="protein sequence ID" value="CE26355"/>
    <property type="gene ID" value="WBGene00004466"/>
    <property type="gene designation" value="rpn-10"/>
</dbReference>
<dbReference type="eggNOG" id="KOG2884">
    <property type="taxonomic scope" value="Eukaryota"/>
</dbReference>
<dbReference type="GeneTree" id="ENSGT00530000064050"/>
<dbReference type="HOGENOM" id="CLU_033293_0_0_1"/>
<dbReference type="InParanoid" id="O61742"/>
<dbReference type="OMA" id="ILACMHD"/>
<dbReference type="OrthoDB" id="1731724at2759"/>
<dbReference type="PhylomeDB" id="O61742"/>
<dbReference type="Reactome" id="R-CEL-9907900">
    <property type="pathway name" value="Proteasome assembly"/>
</dbReference>
<dbReference type="SignaLink" id="O61742"/>
<dbReference type="PRO" id="PR:O61742"/>
<dbReference type="Proteomes" id="UP000001940">
    <property type="component" value="Chromosome I"/>
</dbReference>
<dbReference type="Bgee" id="WBGene00004466">
    <property type="expression patterns" value="Expressed in adult organism and 4 other cell types or tissues"/>
</dbReference>
<dbReference type="GO" id="GO:0005737">
    <property type="term" value="C:cytoplasm"/>
    <property type="evidence" value="ECO:0000314"/>
    <property type="project" value="WormBase"/>
</dbReference>
<dbReference type="GO" id="GO:0005829">
    <property type="term" value="C:cytosol"/>
    <property type="evidence" value="ECO:0000318"/>
    <property type="project" value="GO_Central"/>
</dbReference>
<dbReference type="GO" id="GO:0005634">
    <property type="term" value="C:nucleus"/>
    <property type="evidence" value="ECO:0000314"/>
    <property type="project" value="WormBase"/>
</dbReference>
<dbReference type="GO" id="GO:0008540">
    <property type="term" value="C:proteasome regulatory particle, base subcomplex"/>
    <property type="evidence" value="ECO:0000318"/>
    <property type="project" value="GO_Central"/>
</dbReference>
<dbReference type="GO" id="GO:0031593">
    <property type="term" value="F:polyubiquitin modification-dependent protein binding"/>
    <property type="evidence" value="ECO:0000318"/>
    <property type="project" value="GO_Central"/>
</dbReference>
<dbReference type="GO" id="GO:0043161">
    <property type="term" value="P:proteasome-mediated ubiquitin-dependent protein catabolic process"/>
    <property type="evidence" value="ECO:0000318"/>
    <property type="project" value="GO_Central"/>
</dbReference>
<dbReference type="GO" id="GO:0007283">
    <property type="term" value="P:spermatogenesis"/>
    <property type="evidence" value="ECO:0000315"/>
    <property type="project" value="WormBase"/>
</dbReference>
<dbReference type="GO" id="GO:0006511">
    <property type="term" value="P:ubiquitin-dependent protein catabolic process"/>
    <property type="evidence" value="ECO:0000315"/>
    <property type="project" value="WormBase"/>
</dbReference>
<dbReference type="FunFam" id="3.40.50.410:FF:000005">
    <property type="entry name" value="26S proteasome non-ATPase regulatory subunit 4"/>
    <property type="match status" value="1"/>
</dbReference>
<dbReference type="Gene3D" id="6.10.250.380">
    <property type="match status" value="1"/>
</dbReference>
<dbReference type="Gene3D" id="6.10.300.40">
    <property type="match status" value="1"/>
</dbReference>
<dbReference type="Gene3D" id="3.40.50.410">
    <property type="entry name" value="von Willebrand factor, type A domain"/>
    <property type="match status" value="1"/>
</dbReference>
<dbReference type="InterPro" id="IPR027040">
    <property type="entry name" value="PSMD4"/>
</dbReference>
<dbReference type="InterPro" id="IPR003903">
    <property type="entry name" value="UIM_dom"/>
</dbReference>
<dbReference type="InterPro" id="IPR002035">
    <property type="entry name" value="VWF_A"/>
</dbReference>
<dbReference type="InterPro" id="IPR036465">
    <property type="entry name" value="vWFA_dom_sf"/>
</dbReference>
<dbReference type="PANTHER" id="PTHR10223">
    <property type="entry name" value="26S PROTEASOME NON-ATPASE REGULATORY SUBUNIT 4"/>
    <property type="match status" value="1"/>
</dbReference>
<dbReference type="PANTHER" id="PTHR10223:SF0">
    <property type="entry name" value="26S PROTEASOME NON-ATPASE REGULATORY SUBUNIT 4"/>
    <property type="match status" value="1"/>
</dbReference>
<dbReference type="Pfam" id="PF02809">
    <property type="entry name" value="UIM"/>
    <property type="match status" value="2"/>
</dbReference>
<dbReference type="Pfam" id="PF13519">
    <property type="entry name" value="VWA_2"/>
    <property type="match status" value="1"/>
</dbReference>
<dbReference type="SMART" id="SM00726">
    <property type="entry name" value="UIM"/>
    <property type="match status" value="2"/>
</dbReference>
<dbReference type="SUPFAM" id="SSF53300">
    <property type="entry name" value="vWA-like"/>
    <property type="match status" value="1"/>
</dbReference>
<dbReference type="PROSITE" id="PS50330">
    <property type="entry name" value="UIM"/>
    <property type="match status" value="2"/>
</dbReference>